<accession>A2Z3I9</accession>
<comment type="function">
    <text>The proteasome is a multicatalytic proteinase complex which is characterized by its ability to cleave peptides with Arg, Phe, Tyr, Leu, and Glu adjacent to the leaving group at neutral or slightly basic pH. The proteasome has an ATP-dependent proteolytic activity.</text>
</comment>
<comment type="subunit">
    <text>The 26S proteasome consists of a 20S proteasome core and two 19S regulatory subunits. The 20S proteasome core is composed of 28 subunits that are arranged in four stacked rings, resulting in a barrel-shaped structure. The two end rings are each formed by seven alpha subunits, and the two central rings are each formed by seven beta subunits. The catalytic chamber with the active sites is on the inside of the barrel.</text>
</comment>
<comment type="subcellular location">
    <subcellularLocation>
        <location evidence="1">Cytoplasm</location>
    </subcellularLocation>
    <subcellularLocation>
        <location evidence="1">Nucleus</location>
    </subcellularLocation>
</comment>
<comment type="similarity">
    <text evidence="2">Belongs to the peptidase T1A family.</text>
</comment>
<comment type="sequence caution" evidence="3">
    <conflict type="frameshift">
        <sequence resource="EMBL" id="CT837580"/>
    </conflict>
</comment>
<proteinExistence type="evidence at transcript level"/>
<gene>
    <name type="primary">PAD1</name>
    <name type="ORF">OsI_031132</name>
</gene>
<keyword id="KW-0963">Cytoplasm</keyword>
<keyword id="KW-0539">Nucleus</keyword>
<keyword id="KW-0647">Proteasome</keyword>
<keyword id="KW-1185">Reference proteome</keyword>
<evidence type="ECO:0000250" key="1"/>
<evidence type="ECO:0000255" key="2">
    <source>
        <dbReference type="PROSITE-ProRule" id="PRU00808"/>
    </source>
</evidence>
<evidence type="ECO:0000305" key="3"/>
<reference key="1">
    <citation type="journal article" date="2005" name="PLoS Biol.">
        <title>The genomes of Oryza sativa: a history of duplications.</title>
        <authorList>
            <person name="Yu J."/>
            <person name="Wang J."/>
            <person name="Lin W."/>
            <person name="Li S."/>
            <person name="Li H."/>
            <person name="Zhou J."/>
            <person name="Ni P."/>
            <person name="Dong W."/>
            <person name="Hu S."/>
            <person name="Zeng C."/>
            <person name="Zhang J."/>
            <person name="Zhang Y."/>
            <person name="Li R."/>
            <person name="Xu Z."/>
            <person name="Li S."/>
            <person name="Li X."/>
            <person name="Zheng H."/>
            <person name="Cong L."/>
            <person name="Lin L."/>
            <person name="Yin J."/>
            <person name="Geng J."/>
            <person name="Li G."/>
            <person name="Shi J."/>
            <person name="Liu J."/>
            <person name="Lv H."/>
            <person name="Li J."/>
            <person name="Wang J."/>
            <person name="Deng Y."/>
            <person name="Ran L."/>
            <person name="Shi X."/>
            <person name="Wang X."/>
            <person name="Wu Q."/>
            <person name="Li C."/>
            <person name="Ren X."/>
            <person name="Wang J."/>
            <person name="Wang X."/>
            <person name="Li D."/>
            <person name="Liu D."/>
            <person name="Zhang X."/>
            <person name="Ji Z."/>
            <person name="Zhao W."/>
            <person name="Sun Y."/>
            <person name="Zhang Z."/>
            <person name="Bao J."/>
            <person name="Han Y."/>
            <person name="Dong L."/>
            <person name="Ji J."/>
            <person name="Chen P."/>
            <person name="Wu S."/>
            <person name="Liu J."/>
            <person name="Xiao Y."/>
            <person name="Bu D."/>
            <person name="Tan J."/>
            <person name="Yang L."/>
            <person name="Ye C."/>
            <person name="Zhang J."/>
            <person name="Xu J."/>
            <person name="Zhou Y."/>
            <person name="Yu Y."/>
            <person name="Zhang B."/>
            <person name="Zhuang S."/>
            <person name="Wei H."/>
            <person name="Liu B."/>
            <person name="Lei M."/>
            <person name="Yu H."/>
            <person name="Li Y."/>
            <person name="Xu H."/>
            <person name="Wei S."/>
            <person name="He X."/>
            <person name="Fang L."/>
            <person name="Zhang Z."/>
            <person name="Zhang Y."/>
            <person name="Huang X."/>
            <person name="Su Z."/>
            <person name="Tong W."/>
            <person name="Li J."/>
            <person name="Tong Z."/>
            <person name="Li S."/>
            <person name="Ye J."/>
            <person name="Wang L."/>
            <person name="Fang L."/>
            <person name="Lei T."/>
            <person name="Chen C.-S."/>
            <person name="Chen H.-C."/>
            <person name="Xu Z."/>
            <person name="Li H."/>
            <person name="Huang H."/>
            <person name="Zhang F."/>
            <person name="Xu H."/>
            <person name="Li N."/>
            <person name="Zhao C."/>
            <person name="Li S."/>
            <person name="Dong L."/>
            <person name="Huang Y."/>
            <person name="Li L."/>
            <person name="Xi Y."/>
            <person name="Qi Q."/>
            <person name="Li W."/>
            <person name="Zhang B."/>
            <person name="Hu W."/>
            <person name="Zhang Y."/>
            <person name="Tian X."/>
            <person name="Jiao Y."/>
            <person name="Liang X."/>
            <person name="Jin J."/>
            <person name="Gao L."/>
            <person name="Zheng W."/>
            <person name="Hao B."/>
            <person name="Liu S.-M."/>
            <person name="Wang W."/>
            <person name="Yuan L."/>
            <person name="Cao M."/>
            <person name="McDermott J."/>
            <person name="Samudrala R."/>
            <person name="Wang J."/>
            <person name="Wong G.K.-S."/>
            <person name="Yang H."/>
        </authorList>
    </citation>
    <scope>NUCLEOTIDE SEQUENCE [LARGE SCALE GENOMIC DNA]</scope>
    <source>
        <strain>cv. 93-11</strain>
    </source>
</reference>
<reference key="2">
    <citation type="journal article" date="2007" name="Plant Mol. Biol.">
        <title>A collection of 10,096 indica rice full-length cDNAs reveals highly expressed sequence divergence between Oryza sativa indica and japonica subspecies.</title>
        <authorList>
            <person name="Liu X."/>
            <person name="Lu T."/>
            <person name="Yu S."/>
            <person name="Li Y."/>
            <person name="Huang Y."/>
            <person name="Huang T."/>
            <person name="Zhang L."/>
            <person name="Zhu J."/>
            <person name="Zhao Q."/>
            <person name="Fan D."/>
            <person name="Mu J."/>
            <person name="Shangguan Y."/>
            <person name="Feng Q."/>
            <person name="Guan J."/>
            <person name="Ying K."/>
            <person name="Zhang Y."/>
            <person name="Lin Z."/>
            <person name="Sun Z."/>
            <person name="Qian Q."/>
            <person name="Lu Y."/>
            <person name="Han B."/>
        </authorList>
    </citation>
    <scope>NUCLEOTIDE SEQUENCE [LARGE SCALE MRNA] OF 1-184</scope>
    <source>
        <strain>cv. Guang-Lu-Ai No.4</strain>
    </source>
</reference>
<protein>
    <recommendedName>
        <fullName>Proteasome subunit alpha type-7-B</fullName>
    </recommendedName>
    <alternativeName>
        <fullName>20S proteasome alpha subunit D-2</fullName>
    </alternativeName>
    <alternativeName>
        <fullName>20S proteasome subunit alpha-4-B</fullName>
    </alternativeName>
</protein>
<name>PSA7B_ORYSI</name>
<dbReference type="EMBL" id="CM000134">
    <property type="protein sequence ID" value="EAZ09900.1"/>
    <property type="molecule type" value="Genomic_DNA"/>
</dbReference>
<dbReference type="EMBL" id="CT837580">
    <property type="status" value="NOT_ANNOTATED_CDS"/>
    <property type="molecule type" value="mRNA"/>
</dbReference>
<dbReference type="SMR" id="A2Z3I9"/>
<dbReference type="STRING" id="39946.A2Z3I9"/>
<dbReference type="EnsemblPlants" id="BGIOSGA031166-TA">
    <property type="protein sequence ID" value="BGIOSGA031166-PA"/>
    <property type="gene ID" value="BGIOSGA031166"/>
</dbReference>
<dbReference type="EnsemblPlants" id="OsGoSa_09g0017840.01">
    <property type="protein sequence ID" value="OsGoSa_09g0017840.01"/>
    <property type="gene ID" value="OsGoSa_09g0017840"/>
</dbReference>
<dbReference type="EnsemblPlants" id="OsIR64_09g0018000.01">
    <property type="protein sequence ID" value="OsIR64_09g0018000.01"/>
    <property type="gene ID" value="OsIR64_09g0018000"/>
</dbReference>
<dbReference type="EnsemblPlants" id="OsKYG_09g0017820.01">
    <property type="protein sequence ID" value="OsKYG_09g0017820.01"/>
    <property type="gene ID" value="OsKYG_09g0017820"/>
</dbReference>
<dbReference type="EnsemblPlants" id="OsLaMu_09g0017950.01">
    <property type="protein sequence ID" value="OsLaMu_09g0017950.01"/>
    <property type="gene ID" value="OsLaMu_09g0017950"/>
</dbReference>
<dbReference type="EnsemblPlants" id="OsLima_09g0018070.01">
    <property type="protein sequence ID" value="OsLima_09g0018070.01"/>
    <property type="gene ID" value="OsLima_09g0018070"/>
</dbReference>
<dbReference type="EnsemblPlants" id="OsLiXu_09g0017820.01">
    <property type="protein sequence ID" value="OsLiXu_09g0017820.01"/>
    <property type="gene ID" value="OsLiXu_09g0017820"/>
</dbReference>
<dbReference type="EnsemblPlants" id="OsMH63_09G018360_01">
    <property type="protein sequence ID" value="OsMH63_09G018360_01"/>
    <property type="gene ID" value="OsMH63_09G018360"/>
</dbReference>
<dbReference type="EnsemblPlants" id="OsPr106_09g0018190.01">
    <property type="protein sequence ID" value="OsPr106_09g0018190.01"/>
    <property type="gene ID" value="OsPr106_09g0018190"/>
</dbReference>
<dbReference type="EnsemblPlants" id="OsZS97_09G018030_01">
    <property type="protein sequence ID" value="OsZS97_09G018030_01"/>
    <property type="gene ID" value="OsZS97_09G018030"/>
</dbReference>
<dbReference type="Gramene" id="BGIOSGA031166-TA">
    <property type="protein sequence ID" value="BGIOSGA031166-PA"/>
    <property type="gene ID" value="BGIOSGA031166"/>
</dbReference>
<dbReference type="Gramene" id="OsGoSa_09g0017840.01">
    <property type="protein sequence ID" value="OsGoSa_09g0017840.01"/>
    <property type="gene ID" value="OsGoSa_09g0017840"/>
</dbReference>
<dbReference type="Gramene" id="OsIR64_09g0018000.01">
    <property type="protein sequence ID" value="OsIR64_09g0018000.01"/>
    <property type="gene ID" value="OsIR64_09g0018000"/>
</dbReference>
<dbReference type="Gramene" id="OsKYG_09g0017820.01">
    <property type="protein sequence ID" value="OsKYG_09g0017820.01"/>
    <property type="gene ID" value="OsKYG_09g0017820"/>
</dbReference>
<dbReference type="Gramene" id="OsLaMu_09g0017950.01">
    <property type="protein sequence ID" value="OsLaMu_09g0017950.01"/>
    <property type="gene ID" value="OsLaMu_09g0017950"/>
</dbReference>
<dbReference type="Gramene" id="OsLima_09g0018070.01">
    <property type="protein sequence ID" value="OsLima_09g0018070.01"/>
    <property type="gene ID" value="OsLima_09g0018070"/>
</dbReference>
<dbReference type="Gramene" id="OsLiXu_09g0017820.01">
    <property type="protein sequence ID" value="OsLiXu_09g0017820.01"/>
    <property type="gene ID" value="OsLiXu_09g0017820"/>
</dbReference>
<dbReference type="Gramene" id="OsMH63_09G018360_01">
    <property type="protein sequence ID" value="OsMH63_09G018360_01"/>
    <property type="gene ID" value="OsMH63_09G018360"/>
</dbReference>
<dbReference type="Gramene" id="OsPr106_09g0018190.01">
    <property type="protein sequence ID" value="OsPr106_09g0018190.01"/>
    <property type="gene ID" value="OsPr106_09g0018190"/>
</dbReference>
<dbReference type="Gramene" id="OsZS97_09G018030_01">
    <property type="protein sequence ID" value="OsZS97_09G018030_01"/>
    <property type="gene ID" value="OsZS97_09G018030"/>
</dbReference>
<dbReference type="HOGENOM" id="CLU_035750_4_0_1"/>
<dbReference type="OMA" id="AGTHSEW"/>
<dbReference type="OrthoDB" id="431557at2759"/>
<dbReference type="Proteomes" id="UP000007015">
    <property type="component" value="Chromosome 9"/>
</dbReference>
<dbReference type="GO" id="GO:0005737">
    <property type="term" value="C:cytoplasm"/>
    <property type="evidence" value="ECO:0007669"/>
    <property type="project" value="UniProtKB-SubCell"/>
</dbReference>
<dbReference type="GO" id="GO:0005634">
    <property type="term" value="C:nucleus"/>
    <property type="evidence" value="ECO:0007669"/>
    <property type="project" value="UniProtKB-SubCell"/>
</dbReference>
<dbReference type="GO" id="GO:0019773">
    <property type="term" value="C:proteasome core complex, alpha-subunit complex"/>
    <property type="evidence" value="ECO:0000250"/>
    <property type="project" value="UniProtKB"/>
</dbReference>
<dbReference type="GO" id="GO:0006511">
    <property type="term" value="P:ubiquitin-dependent protein catabolic process"/>
    <property type="evidence" value="ECO:0007669"/>
    <property type="project" value="InterPro"/>
</dbReference>
<dbReference type="CDD" id="cd03755">
    <property type="entry name" value="proteasome_alpha_type_7"/>
    <property type="match status" value="1"/>
</dbReference>
<dbReference type="FunFam" id="3.60.20.10:FF:000004">
    <property type="entry name" value="Proteasome subunit alpha type-4"/>
    <property type="match status" value="1"/>
</dbReference>
<dbReference type="Gene3D" id="3.60.20.10">
    <property type="entry name" value="Glutamine Phosphoribosylpyrophosphate, subunit 1, domain 1"/>
    <property type="match status" value="1"/>
</dbReference>
<dbReference type="InterPro" id="IPR029055">
    <property type="entry name" value="Ntn_hydrolases_N"/>
</dbReference>
<dbReference type="InterPro" id="IPR050115">
    <property type="entry name" value="Proteasome_alpha"/>
</dbReference>
<dbReference type="InterPro" id="IPR023332">
    <property type="entry name" value="Proteasome_alpha-type"/>
</dbReference>
<dbReference type="InterPro" id="IPR000426">
    <property type="entry name" value="Proteasome_asu_N"/>
</dbReference>
<dbReference type="InterPro" id="IPR001353">
    <property type="entry name" value="Proteasome_sua/b"/>
</dbReference>
<dbReference type="NCBIfam" id="NF003075">
    <property type="entry name" value="PRK03996.1"/>
    <property type="match status" value="1"/>
</dbReference>
<dbReference type="PANTHER" id="PTHR11599">
    <property type="entry name" value="PROTEASOME SUBUNIT ALPHA/BETA"/>
    <property type="match status" value="1"/>
</dbReference>
<dbReference type="Pfam" id="PF00227">
    <property type="entry name" value="Proteasome"/>
    <property type="match status" value="1"/>
</dbReference>
<dbReference type="Pfam" id="PF10584">
    <property type="entry name" value="Proteasome_A_N"/>
    <property type="match status" value="1"/>
</dbReference>
<dbReference type="SMART" id="SM00948">
    <property type="entry name" value="Proteasome_A_N"/>
    <property type="match status" value="1"/>
</dbReference>
<dbReference type="SUPFAM" id="SSF56235">
    <property type="entry name" value="N-terminal nucleophile aminohydrolases (Ntn hydrolases)"/>
    <property type="match status" value="1"/>
</dbReference>
<dbReference type="PROSITE" id="PS00388">
    <property type="entry name" value="PROTEASOME_ALPHA_1"/>
    <property type="match status" value="1"/>
</dbReference>
<dbReference type="PROSITE" id="PS51475">
    <property type="entry name" value="PROTEASOME_ALPHA_2"/>
    <property type="match status" value="1"/>
</dbReference>
<organism>
    <name type="scientific">Oryza sativa subsp. indica</name>
    <name type="common">Rice</name>
    <dbReference type="NCBI Taxonomy" id="39946"/>
    <lineage>
        <taxon>Eukaryota</taxon>
        <taxon>Viridiplantae</taxon>
        <taxon>Streptophyta</taxon>
        <taxon>Embryophyta</taxon>
        <taxon>Tracheophyta</taxon>
        <taxon>Spermatophyta</taxon>
        <taxon>Magnoliopsida</taxon>
        <taxon>Liliopsida</taxon>
        <taxon>Poales</taxon>
        <taxon>Poaceae</taxon>
        <taxon>BOP clade</taxon>
        <taxon>Oryzoideae</taxon>
        <taxon>Oryzeae</taxon>
        <taxon>Oryzinae</taxon>
        <taxon>Oryza</taxon>
        <taxon>Oryza sativa</taxon>
    </lineage>
</organism>
<feature type="chain" id="PRO_0000301665" description="Proteasome subunit alpha type-7-B">
    <location>
        <begin position="1"/>
        <end position="249"/>
    </location>
</feature>
<sequence length="249" mass="27214">MARYDRAITVFSPDGHLFQVEYALEAVRKGNAAVGVRGSDTVVLGVEKKSTPKLQDSRSVRKIASLDTHIALACAGLKADARVLINRARVECQSHRLTVEDAVTVEYITRYIAGLQQKYTQSGGVRPFGLSTLIVGFDPYTDKPALYQTDPSGTFSAWKANATGRNSNSMREFLEKNYKETSGKETIKLAIRALLEVVESGGKNIEIAVMTQKDGLRQLEEAEIDEYVAEIEAEKAAAEAAKKGAPKET</sequence>